<reference key="1">
    <citation type="journal article" date="2001" name="J. Appl. Microbiol.">
        <title>Cloning and expression analysis of the 28 kDa protein from Lactobacillus delbrueckii subsp. lactis ATCC 4797 hypothesized to influence lactacin B production.</title>
        <authorList>
            <person name="Ulrich R.L."/>
            <person name="Hughes T.A."/>
        </authorList>
    </citation>
    <scope>NUCLEOTIDE SEQUENCE [GENOMIC DNA]</scope>
    <scope>PARTIAL PROTEIN SEQUENCE</scope>
    <source>
        <strain>ATCC 4797 / DSM 20076 / NCDO 299 / NCIMB 7854 / F 59</strain>
    </source>
</reference>
<organism>
    <name type="scientific">Lactobacillus delbrueckii subsp. lactis</name>
    <dbReference type="NCBI Taxonomy" id="29397"/>
    <lineage>
        <taxon>Bacteria</taxon>
        <taxon>Bacillati</taxon>
        <taxon>Bacillota</taxon>
        <taxon>Bacilli</taxon>
        <taxon>Lactobacillales</taxon>
        <taxon>Lactobacillaceae</taxon>
        <taxon>Lactobacillus</taxon>
    </lineage>
</organism>
<accession>Q93GB7</accession>
<protein>
    <recommendedName>
        <fullName evidence="1">Triosephosphate isomerase</fullName>
        <shortName evidence="1">TIM</shortName>
        <shortName evidence="1">TPI</shortName>
        <ecNumber evidence="1">5.3.1.1</ecNumber>
    </recommendedName>
    <alternativeName>
        <fullName evidence="1">Triose-phosphate isomerase</fullName>
    </alternativeName>
</protein>
<name>TPIS_LACDL</name>
<dbReference type="EC" id="5.3.1.1" evidence="1"/>
<dbReference type="EMBL" id="AF288619">
    <property type="protein sequence ID" value="AAL09962.1"/>
    <property type="molecule type" value="Genomic_DNA"/>
</dbReference>
<dbReference type="RefSeq" id="WP_002879988.1">
    <property type="nucleotide sequence ID" value="NZ_VBSS01000003.1"/>
</dbReference>
<dbReference type="SMR" id="Q93GB7"/>
<dbReference type="GeneID" id="69668626"/>
<dbReference type="OrthoDB" id="9809429at2"/>
<dbReference type="UniPathway" id="UPA00109">
    <property type="reaction ID" value="UER00189"/>
</dbReference>
<dbReference type="UniPathway" id="UPA00138"/>
<dbReference type="GO" id="GO:0005829">
    <property type="term" value="C:cytosol"/>
    <property type="evidence" value="ECO:0007669"/>
    <property type="project" value="TreeGrafter"/>
</dbReference>
<dbReference type="GO" id="GO:0004807">
    <property type="term" value="F:triose-phosphate isomerase activity"/>
    <property type="evidence" value="ECO:0007669"/>
    <property type="project" value="UniProtKB-UniRule"/>
</dbReference>
<dbReference type="GO" id="GO:0006094">
    <property type="term" value="P:gluconeogenesis"/>
    <property type="evidence" value="ECO:0007669"/>
    <property type="project" value="UniProtKB-UniRule"/>
</dbReference>
<dbReference type="GO" id="GO:0046166">
    <property type="term" value="P:glyceraldehyde-3-phosphate biosynthetic process"/>
    <property type="evidence" value="ECO:0007669"/>
    <property type="project" value="TreeGrafter"/>
</dbReference>
<dbReference type="GO" id="GO:0019563">
    <property type="term" value="P:glycerol catabolic process"/>
    <property type="evidence" value="ECO:0007669"/>
    <property type="project" value="TreeGrafter"/>
</dbReference>
<dbReference type="GO" id="GO:0006096">
    <property type="term" value="P:glycolytic process"/>
    <property type="evidence" value="ECO:0007669"/>
    <property type="project" value="UniProtKB-UniRule"/>
</dbReference>
<dbReference type="CDD" id="cd00311">
    <property type="entry name" value="TIM"/>
    <property type="match status" value="1"/>
</dbReference>
<dbReference type="FunFam" id="3.20.20.70:FF:000016">
    <property type="entry name" value="Triosephosphate isomerase"/>
    <property type="match status" value="1"/>
</dbReference>
<dbReference type="Gene3D" id="3.20.20.70">
    <property type="entry name" value="Aldolase class I"/>
    <property type="match status" value="1"/>
</dbReference>
<dbReference type="HAMAP" id="MF_00147_B">
    <property type="entry name" value="TIM_B"/>
    <property type="match status" value="1"/>
</dbReference>
<dbReference type="InterPro" id="IPR013785">
    <property type="entry name" value="Aldolase_TIM"/>
</dbReference>
<dbReference type="InterPro" id="IPR035990">
    <property type="entry name" value="TIM_sf"/>
</dbReference>
<dbReference type="InterPro" id="IPR022896">
    <property type="entry name" value="TrioseP_Isoase_bac/euk"/>
</dbReference>
<dbReference type="InterPro" id="IPR000652">
    <property type="entry name" value="Triosephosphate_isomerase"/>
</dbReference>
<dbReference type="InterPro" id="IPR020861">
    <property type="entry name" value="Triosephosphate_isomerase_AS"/>
</dbReference>
<dbReference type="NCBIfam" id="TIGR00419">
    <property type="entry name" value="tim"/>
    <property type="match status" value="1"/>
</dbReference>
<dbReference type="PANTHER" id="PTHR21139">
    <property type="entry name" value="TRIOSEPHOSPHATE ISOMERASE"/>
    <property type="match status" value="1"/>
</dbReference>
<dbReference type="PANTHER" id="PTHR21139:SF42">
    <property type="entry name" value="TRIOSEPHOSPHATE ISOMERASE"/>
    <property type="match status" value="1"/>
</dbReference>
<dbReference type="Pfam" id="PF00121">
    <property type="entry name" value="TIM"/>
    <property type="match status" value="1"/>
</dbReference>
<dbReference type="SUPFAM" id="SSF51351">
    <property type="entry name" value="Triosephosphate isomerase (TIM)"/>
    <property type="match status" value="1"/>
</dbReference>
<dbReference type="PROSITE" id="PS00171">
    <property type="entry name" value="TIM_1"/>
    <property type="match status" value="1"/>
</dbReference>
<dbReference type="PROSITE" id="PS51440">
    <property type="entry name" value="TIM_2"/>
    <property type="match status" value="1"/>
</dbReference>
<comment type="function">
    <text>Seems to be capable of enhancing bacteriocin synthesis.</text>
</comment>
<comment type="function">
    <text evidence="1">Involved in the gluconeogenesis. Catalyzes stereospecifically the conversion of dihydroxyacetone phosphate (DHAP) to D-glyceraldehyde-3-phosphate (G3P).</text>
</comment>
<comment type="catalytic activity">
    <reaction evidence="1">
        <text>D-glyceraldehyde 3-phosphate = dihydroxyacetone phosphate</text>
        <dbReference type="Rhea" id="RHEA:18585"/>
        <dbReference type="ChEBI" id="CHEBI:57642"/>
        <dbReference type="ChEBI" id="CHEBI:59776"/>
        <dbReference type="EC" id="5.3.1.1"/>
    </reaction>
</comment>
<comment type="pathway">
    <text evidence="1">Carbohydrate biosynthesis; gluconeogenesis.</text>
</comment>
<comment type="pathway">
    <text evidence="1">Carbohydrate degradation; glycolysis; D-glyceraldehyde 3-phosphate from glycerone phosphate: step 1/1.</text>
</comment>
<comment type="subunit">
    <text evidence="1">Homodimer.</text>
</comment>
<comment type="subcellular location">
    <subcellularLocation>
        <location evidence="1">Cytoplasm</location>
    </subcellularLocation>
</comment>
<comment type="similarity">
    <text evidence="1">Belongs to the triosephosphate isomerase family.</text>
</comment>
<proteinExistence type="evidence at protein level"/>
<feature type="chain" id="PRO_0000090232" description="Triosephosphate isomerase">
    <location>
        <begin position="1"/>
        <end position="252"/>
    </location>
</feature>
<feature type="active site" description="Electrophile" evidence="1">
    <location>
        <position position="96"/>
    </location>
</feature>
<feature type="active site" description="Proton acceptor" evidence="1">
    <location>
        <position position="168"/>
    </location>
</feature>
<feature type="binding site" evidence="1">
    <location>
        <begin position="10"/>
        <end position="12"/>
    </location>
    <ligand>
        <name>substrate</name>
    </ligand>
</feature>
<feature type="binding site" evidence="1">
    <location>
        <position position="174"/>
    </location>
    <ligand>
        <name>substrate</name>
    </ligand>
</feature>
<feature type="binding site" evidence="1">
    <location>
        <position position="214"/>
    </location>
    <ligand>
        <name>substrate</name>
    </ligand>
</feature>
<feature type="binding site" evidence="1">
    <location>
        <begin position="235"/>
        <end position="236"/>
    </location>
    <ligand>
        <name>substrate</name>
    </ligand>
</feature>
<gene>
    <name evidence="1" type="primary">tpiA</name>
</gene>
<keyword id="KW-0963">Cytoplasm</keyword>
<keyword id="KW-0903">Direct protein sequencing</keyword>
<keyword id="KW-0312">Gluconeogenesis</keyword>
<keyword id="KW-0324">Glycolysis</keyword>
<keyword id="KW-0413">Isomerase</keyword>
<evidence type="ECO:0000255" key="1">
    <source>
        <dbReference type="HAMAP-Rule" id="MF_00147"/>
    </source>
</evidence>
<sequence>MSRTPIIAGNWKLNMNPKETVEFVNAVKDQLPDPSKVESVICAPAVDLDALLKAAEGSNLHVGAENCYWENSGAFTGETSPAVLKEMGVQYVIIGHSERRDYFHETDEDINKKAKAIFANGLTPILCCGESLEIREAGKEKEWVVSQIKADLEGLTSEQVSKLVIAYEPIWAIGTGKTASSDQAEEMCKTIRETVKDLYNEETAENVRIQYGGSVKPANIKELMAKPNIDGGLVGGASLVPDSYLALVNYQD</sequence>